<protein>
    <recommendedName>
        <fullName evidence="12">Hepatocyte growth factor activator serine protease</fullName>
        <shortName>HGF activator</shortName>
        <shortName>HGFA</shortName>
        <shortName>HGFA serine protease</shortName>
        <ecNumber evidence="9">3.4.21.-</ecNumber>
    </recommendedName>
    <alternativeName>
        <fullName evidence="12">Serine protease HGFAC</fullName>
    </alternativeName>
    <component>
        <recommendedName>
            <fullName>Hepatocyte growth factor activator short chain</fullName>
        </recommendedName>
    </component>
    <component>
        <recommendedName>
            <fullName>Hepatocyte growth factor activator long chain</fullName>
        </recommendedName>
    </component>
</protein>
<accession>Q9R098</accession>
<accession>Q9JKV4</accession>
<comment type="function">
    <text evidence="9">Serine protease that hydrolyzes the inactive zymogen hepatocyte growth factor (HGFsc) to an activated disulfide-linked heterodimer, then initiating hepatocyte growth factor receptor signaling pathway.</text>
</comment>
<comment type="subunit">
    <text evidence="9">Heterodimer of a short chain and a long chain linked by a disulfide bond.</text>
</comment>
<comment type="subcellular location">
    <subcellularLocation>
        <location evidence="9">Secreted</location>
    </subcellularLocation>
    <text evidence="1">Exists as an inactive zymogen in plasma. Exists as an active heterodimeric form in serum.</text>
</comment>
<comment type="PTM">
    <text evidence="1">The active form of HGFAC presents in the serum is derived from the COOH-terminal region of the precursor by the cleavage of bonds between Arg-369 and Val-370 and Arg-405 and Ile-406.</text>
</comment>
<comment type="similarity">
    <text evidence="5">Belongs to the peptidase S1 family.</text>
</comment>
<proteinExistence type="evidence at protein level"/>
<gene>
    <name evidence="13" type="primary">Hgfac</name>
</gene>
<evidence type="ECO:0000250" key="1">
    <source>
        <dbReference type="UniProtKB" id="Q04756"/>
    </source>
</evidence>
<evidence type="ECO:0000255" key="2"/>
<evidence type="ECO:0000255" key="3">
    <source>
        <dbReference type="PROSITE-ProRule" id="PRU00076"/>
    </source>
</evidence>
<evidence type="ECO:0000255" key="4">
    <source>
        <dbReference type="PROSITE-ProRule" id="PRU00121"/>
    </source>
</evidence>
<evidence type="ECO:0000255" key="5">
    <source>
        <dbReference type="PROSITE-ProRule" id="PRU00274"/>
    </source>
</evidence>
<evidence type="ECO:0000255" key="6">
    <source>
        <dbReference type="PROSITE-ProRule" id="PRU00478"/>
    </source>
</evidence>
<evidence type="ECO:0000255" key="7">
    <source>
        <dbReference type="PROSITE-ProRule" id="PRU00479"/>
    </source>
</evidence>
<evidence type="ECO:0000256" key="8">
    <source>
        <dbReference type="SAM" id="MobiDB-lite"/>
    </source>
</evidence>
<evidence type="ECO:0000269" key="9">
    <source>
    </source>
</evidence>
<evidence type="ECO:0000269" key="10">
    <source>
    </source>
</evidence>
<evidence type="ECO:0000269" key="11">
    <source>
    </source>
</evidence>
<evidence type="ECO:0000305" key="12"/>
<evidence type="ECO:0000312" key="13">
    <source>
        <dbReference type="MGI" id="MGI:1859281"/>
    </source>
</evidence>
<organism>
    <name type="scientific">Mus musculus</name>
    <name type="common">Mouse</name>
    <dbReference type="NCBI Taxonomy" id="10090"/>
    <lineage>
        <taxon>Eukaryota</taxon>
        <taxon>Metazoa</taxon>
        <taxon>Chordata</taxon>
        <taxon>Craniata</taxon>
        <taxon>Vertebrata</taxon>
        <taxon>Euteleostomi</taxon>
        <taxon>Mammalia</taxon>
        <taxon>Eutheria</taxon>
        <taxon>Euarchontoglires</taxon>
        <taxon>Glires</taxon>
        <taxon>Rodentia</taxon>
        <taxon>Myomorpha</taxon>
        <taxon>Muroidea</taxon>
        <taxon>Muridae</taxon>
        <taxon>Murinae</taxon>
        <taxon>Mus</taxon>
        <taxon>Mus</taxon>
    </lineage>
</organism>
<sequence length="653" mass="70568">MGRQAWISSLCPLPRPCPFLLLLLLLVVPRGAQPQAGRNHTEPPGPNVTATPVTPTIPVISGNVSTSTESAPAAETEGPQSERYPPPSSSSPPGGQVLTESGQPCRFPFRYGGRMLHSCTSEGSAYRKWCATTHNYDRDRAWGYCAEVTLPVEGPAILDPCASGPCLNGGTCSSTHDHGSYHCSCPLAFTGKDCGTEKCFDETRYEYFEVGDHWARVSEGHVEQCGCMEGQARCEDTHHTACLSSPCLNGGTCHLIVGTGTSVCTCPLGYAGRFCNIVPTEHCFLGNGTEYRGVASTAASGLSCLAWNSDLLYQELHVDSVAAAVLLGLGPHAYCRNPDKDERPWCYVVKDNALSWEYCRLTACESLARVHSQTPEILAALPESAPAVRPTCGKRHKKRTFLRPRIIGGSSSLPGSHPWLAAIYIGNSFCAGSLVHTCWVVSAAHCFANSPPRDSITVVLGQHFFNRTTDVTQTFGIEKYVPYTLYSVFNPNNHDLVLIRLKKKGERCAVRSQFVQPICLPEAGSSFPTGHKCQIAGWGHMDENVSSYSNSLLEALVPLVADHKCSSPEVYGADISPNMLCAGYFDCKSDACQGDSGGPLVCEKNGVAYLYGIISWGDGCGRLNKPGVYTRVANYVDWINDRIRPPKRPVATS</sequence>
<name>HGFA_MOUSE</name>
<keyword id="KW-1015">Disulfide bond</keyword>
<keyword id="KW-0245">EGF-like domain</keyword>
<keyword id="KW-0325">Glycoprotein</keyword>
<keyword id="KW-0378">Hydrolase</keyword>
<keyword id="KW-0420">Kringle</keyword>
<keyword id="KW-0645">Protease</keyword>
<keyword id="KW-1185">Reference proteome</keyword>
<keyword id="KW-0677">Repeat</keyword>
<keyword id="KW-0964">Secreted</keyword>
<keyword id="KW-0720">Serine protease</keyword>
<keyword id="KW-0732">Signal</keyword>
<keyword id="KW-0865">Zymogen</keyword>
<reference key="1">
    <citation type="journal article" date="2000" name="Biochim. Biophys. Acta">
        <title>Mouse hepatocyte growth factor activator gene: its expression not only in the liver but also in the gastrointestinal tract.</title>
        <authorList>
            <person name="Itoh H."/>
            <person name="Hamasuna R."/>
            <person name="Kataoka H."/>
            <person name="Yamauchi M."/>
            <person name="Miyazawa K."/>
            <person name="Kitamura N."/>
            <person name="Koono M."/>
        </authorList>
    </citation>
    <scope>NUCLEOTIDE SEQUENCE [MRNA]</scope>
    <source>
        <strain>BALB/cJ</strain>
    </source>
</reference>
<reference key="2">
    <citation type="journal article" date="2001" name="J. Biol. Chem.">
        <title>Activation of hepatocyte growth factor (HGF) by endogenous HGF activator is required for metanephric kidney morphogenesis in vitro.</title>
        <authorList>
            <person name="van Adelsberg J.S."/>
            <person name="Sehgal S."/>
            <person name="Kukes A."/>
            <person name="Brady C."/>
            <person name="Barasch J."/>
            <person name="Yang J."/>
            <person name="Huan Y."/>
        </authorList>
    </citation>
    <scope>NUCLEOTIDE SEQUENCE [MRNA]</scope>
    <scope>SUBCELLULAR LOCATION</scope>
    <scope>SUBUNIT</scope>
    <scope>FUNCTION</scope>
</reference>
<reference key="3">
    <citation type="journal article" date="2006" name="J. Proteome Res.">
        <title>Proteome-wide characterization of N-glycosylation events by diagonal chromatography.</title>
        <authorList>
            <person name="Ghesquiere B."/>
            <person name="Van Damme J."/>
            <person name="Martens L."/>
            <person name="Vandekerckhove J."/>
            <person name="Gevaert K."/>
        </authorList>
    </citation>
    <scope>GLYCOSYLATION [LARGE SCALE ANALYSIS] AT ASN-466</scope>
    <source>
        <strain>C57BL/6J</strain>
        <tissue>Plasma</tissue>
    </source>
</reference>
<reference key="4">
    <citation type="journal article" date="2007" name="J. Proteome Res.">
        <title>Enhanced analysis of the mouse plasma proteome using cysteine-containing tryptic glycopeptides.</title>
        <authorList>
            <person name="Bernhard O.K."/>
            <person name="Kapp E.A."/>
            <person name="Simpson R.J."/>
        </authorList>
    </citation>
    <scope>GLYCOSYLATION [LARGE SCALE ANALYSIS] AT ASN-287</scope>
    <source>
        <strain>C57BL/6J</strain>
        <tissue>Plasma</tissue>
    </source>
</reference>
<feature type="signal peptide" evidence="1">
    <location>
        <begin position="1"/>
        <end position="34"/>
    </location>
</feature>
<feature type="propeptide" id="PRO_0000027914" description="Removed in mature form" evidence="1">
    <location>
        <begin position="35"/>
        <end position="369"/>
    </location>
</feature>
<feature type="chain" id="PRO_0000027915" description="Hepatocyte growth factor activator short chain" evidence="1">
    <location>
        <begin position="370"/>
        <end position="405"/>
    </location>
</feature>
<feature type="chain" id="PRO_0000027916" description="Hepatocyte growth factor activator long chain" evidence="1">
    <location>
        <begin position="406"/>
        <end position="653"/>
    </location>
</feature>
<feature type="domain" description="Fibronectin type-II" evidence="6 7">
    <location>
        <begin position="100"/>
        <end position="147"/>
    </location>
</feature>
<feature type="domain" description="EGF-like 1" evidence="3">
    <location>
        <begin position="157"/>
        <end position="195"/>
    </location>
</feature>
<feature type="domain" description="Fibronectin type-I" evidence="6">
    <location>
        <begin position="197"/>
        <end position="237"/>
    </location>
</feature>
<feature type="domain" description="EGF-like 2" evidence="3">
    <location>
        <begin position="238"/>
        <end position="276"/>
    </location>
</feature>
<feature type="domain" description="Kringle" evidence="4">
    <location>
        <begin position="283"/>
        <end position="364"/>
    </location>
</feature>
<feature type="domain" description="Peptidase S1" evidence="5">
    <location>
        <begin position="406"/>
        <end position="644"/>
    </location>
</feature>
<feature type="region of interest" description="Disordered" evidence="8">
    <location>
        <begin position="34"/>
        <end position="98"/>
    </location>
</feature>
<feature type="compositionally biased region" description="Low complexity" evidence="8">
    <location>
        <begin position="47"/>
        <end position="59"/>
    </location>
</feature>
<feature type="active site" description="Charge relay system" evidence="1 5">
    <location>
        <position position="445"/>
    </location>
</feature>
<feature type="active site" description="Charge relay system" evidence="1 5">
    <location>
        <position position="495"/>
    </location>
</feature>
<feature type="active site" description="Charge relay system" evidence="1 5">
    <location>
        <position position="596"/>
    </location>
</feature>
<feature type="site" description="Cleavage" evidence="1">
    <location>
        <begin position="369"/>
        <end position="370"/>
    </location>
</feature>
<feature type="site" description="Cleavage" evidence="1">
    <location>
        <begin position="405"/>
        <end position="406"/>
    </location>
</feature>
<feature type="glycosylation site" description="N-linked (GlcNAc...) asparagine" evidence="2">
    <location>
        <position position="39"/>
    </location>
</feature>
<feature type="glycosylation site" description="N-linked (GlcNAc...) asparagine" evidence="2">
    <location>
        <position position="47"/>
    </location>
</feature>
<feature type="glycosylation site" description="N-linked (GlcNAc...) asparagine" evidence="2">
    <location>
        <position position="63"/>
    </location>
</feature>
<feature type="glycosylation site" description="N-linked (GlcNAc...) asparagine" evidence="11">
    <location>
        <position position="287"/>
    </location>
</feature>
<feature type="glycosylation site" description="N-linked (GlcNAc...) asparagine" evidence="10">
    <location>
        <position position="466"/>
    </location>
</feature>
<feature type="glycosylation site" description="N-linked (GlcNAc...) asparagine" evidence="2">
    <location>
        <position position="544"/>
    </location>
</feature>
<feature type="disulfide bond" evidence="7">
    <location>
        <begin position="105"/>
        <end position="130"/>
    </location>
</feature>
<feature type="disulfide bond" evidence="7">
    <location>
        <begin position="119"/>
        <end position="145"/>
    </location>
</feature>
<feature type="disulfide bond" evidence="3">
    <location>
        <begin position="161"/>
        <end position="172"/>
    </location>
</feature>
<feature type="disulfide bond" evidence="3">
    <location>
        <begin position="166"/>
        <end position="183"/>
    </location>
</feature>
<feature type="disulfide bond" evidence="3">
    <location>
        <begin position="185"/>
        <end position="194"/>
    </location>
</feature>
<feature type="disulfide bond" evidence="6">
    <location>
        <begin position="199"/>
        <end position="227"/>
    </location>
</feature>
<feature type="disulfide bond" evidence="6">
    <location>
        <begin position="225"/>
        <end position="234"/>
    </location>
</feature>
<feature type="disulfide bond" evidence="3">
    <location>
        <begin position="242"/>
        <end position="253"/>
    </location>
</feature>
<feature type="disulfide bond" evidence="3">
    <location>
        <begin position="247"/>
        <end position="264"/>
    </location>
</feature>
<feature type="disulfide bond" evidence="3">
    <location>
        <begin position="266"/>
        <end position="275"/>
    </location>
</feature>
<feature type="disulfide bond" evidence="4">
    <location>
        <begin position="283"/>
        <end position="364"/>
    </location>
</feature>
<feature type="disulfide bond" evidence="4">
    <location>
        <begin position="304"/>
        <end position="346"/>
    </location>
</feature>
<feature type="disulfide bond" evidence="4">
    <location>
        <begin position="335"/>
        <end position="359"/>
    </location>
</feature>
<feature type="disulfide bond" evidence="1 4">
    <location>
        <begin position="392"/>
        <end position="519"/>
    </location>
</feature>
<feature type="disulfide bond" description="Interchain (with C-521)" evidence="1 4">
    <location>
        <position position="392"/>
    </location>
</feature>
<feature type="disulfide bond" evidence="1 4">
    <location>
        <begin position="430"/>
        <end position="446"/>
    </location>
</feature>
<feature type="disulfide bond" evidence="1 4">
    <location>
        <begin position="438"/>
        <end position="508"/>
    </location>
</feature>
<feature type="disulfide bond" description="Interchain (with C-394)" evidence="1 4">
    <location>
        <position position="519"/>
    </location>
</feature>
<feature type="disulfide bond" evidence="1 4">
    <location>
        <begin position="533"/>
        <end position="602"/>
    </location>
</feature>
<feature type="disulfide bond" evidence="1 4">
    <location>
        <begin position="565"/>
        <end position="581"/>
    </location>
</feature>
<feature type="disulfide bond" evidence="1 4">
    <location>
        <begin position="592"/>
        <end position="620"/>
    </location>
</feature>
<feature type="sequence conflict" description="In Ref. 2; AAF34712." evidence="12" ref="2">
    <original>G</original>
    <variation>W</variation>
    <location>
        <position position="164"/>
    </location>
</feature>
<dbReference type="EC" id="3.4.21.-" evidence="9"/>
<dbReference type="EMBL" id="AF099017">
    <property type="protein sequence ID" value="AAF02489.1"/>
    <property type="molecule type" value="mRNA"/>
</dbReference>
<dbReference type="EMBL" id="AF224724">
    <property type="protein sequence ID" value="AAF34712.1"/>
    <property type="molecule type" value="mRNA"/>
</dbReference>
<dbReference type="CCDS" id="CCDS19223.1"/>
<dbReference type="RefSeq" id="NP_062320.2">
    <property type="nucleotide sequence ID" value="NM_019447.3"/>
</dbReference>
<dbReference type="SMR" id="Q9R098"/>
<dbReference type="FunCoup" id="Q9R098">
    <property type="interactions" value="213"/>
</dbReference>
<dbReference type="STRING" id="10090.ENSMUSP00000030985"/>
<dbReference type="MEROPS" id="S01.228"/>
<dbReference type="GlyCosmos" id="Q9R098">
    <property type="glycosylation" value="6 sites, No reported glycans"/>
</dbReference>
<dbReference type="GlyGen" id="Q9R098">
    <property type="glycosylation" value="7 sites, 1 N-linked glycan (1 site)"/>
</dbReference>
<dbReference type="iPTMnet" id="Q9R098"/>
<dbReference type="PhosphoSitePlus" id="Q9R098"/>
<dbReference type="CPTAC" id="non-CPTAC-3581"/>
<dbReference type="PaxDb" id="10090-ENSMUSP00000030985"/>
<dbReference type="ProteomicsDB" id="269565"/>
<dbReference type="Antibodypedia" id="3925">
    <property type="antibodies" value="191 antibodies from 23 providers"/>
</dbReference>
<dbReference type="DNASU" id="54426"/>
<dbReference type="Ensembl" id="ENSMUST00000030985.10">
    <property type="protein sequence ID" value="ENSMUSP00000030985.7"/>
    <property type="gene ID" value="ENSMUSG00000029102.10"/>
</dbReference>
<dbReference type="GeneID" id="54426"/>
<dbReference type="KEGG" id="mmu:54426"/>
<dbReference type="UCSC" id="uc008xdj.2">
    <property type="organism name" value="mouse"/>
</dbReference>
<dbReference type="AGR" id="MGI:1859281"/>
<dbReference type="CTD" id="3083"/>
<dbReference type="MGI" id="MGI:1859281">
    <property type="gene designation" value="Hgfac"/>
</dbReference>
<dbReference type="VEuPathDB" id="HostDB:ENSMUSG00000029102"/>
<dbReference type="eggNOG" id="KOG1217">
    <property type="taxonomic scope" value="Eukaryota"/>
</dbReference>
<dbReference type="eggNOG" id="KOG3627">
    <property type="taxonomic scope" value="Eukaryota"/>
</dbReference>
<dbReference type="GeneTree" id="ENSGT00940000159778"/>
<dbReference type="HOGENOM" id="CLU_006842_18_1_1"/>
<dbReference type="InParanoid" id="Q9R098"/>
<dbReference type="OMA" id="ETRYEYF"/>
<dbReference type="OrthoDB" id="9925451at2759"/>
<dbReference type="PhylomeDB" id="Q9R098"/>
<dbReference type="TreeFam" id="TF329901"/>
<dbReference type="Reactome" id="R-MMU-6806942">
    <property type="pathway name" value="MET Receptor Activation"/>
</dbReference>
<dbReference type="BioGRID-ORCS" id="54426">
    <property type="hits" value="2 hits in 79 CRISPR screens"/>
</dbReference>
<dbReference type="ChiTaRS" id="Hgfac">
    <property type="organism name" value="mouse"/>
</dbReference>
<dbReference type="PRO" id="PR:Q9R098"/>
<dbReference type="Proteomes" id="UP000000589">
    <property type="component" value="Chromosome 5"/>
</dbReference>
<dbReference type="RNAct" id="Q9R098">
    <property type="molecule type" value="protein"/>
</dbReference>
<dbReference type="Bgee" id="ENSMUSG00000029102">
    <property type="expression patterns" value="Expressed in left lobe of liver and 59 other cell types or tissues"/>
</dbReference>
<dbReference type="ExpressionAtlas" id="Q9R098">
    <property type="expression patterns" value="baseline and differential"/>
</dbReference>
<dbReference type="GO" id="GO:0005737">
    <property type="term" value="C:cytoplasm"/>
    <property type="evidence" value="ECO:0000314"/>
    <property type="project" value="MGI"/>
</dbReference>
<dbReference type="GO" id="GO:0005615">
    <property type="term" value="C:extracellular space"/>
    <property type="evidence" value="ECO:0007669"/>
    <property type="project" value="InterPro"/>
</dbReference>
<dbReference type="GO" id="GO:0005791">
    <property type="term" value="C:rough endoplasmic reticulum"/>
    <property type="evidence" value="ECO:0000314"/>
    <property type="project" value="MGI"/>
</dbReference>
<dbReference type="GO" id="GO:0004252">
    <property type="term" value="F:serine-type endopeptidase activity"/>
    <property type="evidence" value="ECO:0007669"/>
    <property type="project" value="InterPro"/>
</dbReference>
<dbReference type="GO" id="GO:0006508">
    <property type="term" value="P:proteolysis"/>
    <property type="evidence" value="ECO:0007669"/>
    <property type="project" value="UniProtKB-KW"/>
</dbReference>
<dbReference type="CDD" id="cd00054">
    <property type="entry name" value="EGF_CA"/>
    <property type="match status" value="2"/>
</dbReference>
<dbReference type="CDD" id="cd00061">
    <property type="entry name" value="FN1"/>
    <property type="match status" value="1"/>
</dbReference>
<dbReference type="CDD" id="cd00062">
    <property type="entry name" value="FN2"/>
    <property type="match status" value="1"/>
</dbReference>
<dbReference type="CDD" id="cd00108">
    <property type="entry name" value="KR"/>
    <property type="match status" value="1"/>
</dbReference>
<dbReference type="CDD" id="cd00190">
    <property type="entry name" value="Tryp_SPc"/>
    <property type="match status" value="1"/>
</dbReference>
<dbReference type="FunFam" id="2.10.25.10:FF:000438">
    <property type="entry name" value="Hepatocyte growth factor activator"/>
    <property type="match status" value="1"/>
</dbReference>
<dbReference type="FunFam" id="2.40.10.10:FF:000061">
    <property type="entry name" value="Hepatocyte growth factor activator"/>
    <property type="match status" value="1"/>
</dbReference>
<dbReference type="FunFam" id="2.10.10.10:FF:000007">
    <property type="entry name" value="hepatocyte growth factor activator"/>
    <property type="match status" value="1"/>
</dbReference>
<dbReference type="FunFam" id="2.10.25.10:FF:000338">
    <property type="entry name" value="hepatocyte growth factor activator"/>
    <property type="match status" value="1"/>
</dbReference>
<dbReference type="FunFam" id="2.40.20.10:FF:000001">
    <property type="entry name" value="Urokinase-type plasminogen activator"/>
    <property type="match status" value="1"/>
</dbReference>
<dbReference type="Gene3D" id="2.10.10.10">
    <property type="entry name" value="Fibronectin, type II, collagen-binding"/>
    <property type="match status" value="1"/>
</dbReference>
<dbReference type="Gene3D" id="2.10.25.10">
    <property type="entry name" value="Laminin"/>
    <property type="match status" value="2"/>
</dbReference>
<dbReference type="Gene3D" id="2.40.20.10">
    <property type="entry name" value="Plasminogen Kringle 4"/>
    <property type="match status" value="1"/>
</dbReference>
<dbReference type="Gene3D" id="2.40.10.10">
    <property type="entry name" value="Trypsin-like serine proteases"/>
    <property type="match status" value="1"/>
</dbReference>
<dbReference type="InterPro" id="IPR014394">
    <property type="entry name" value="Coagulation_fac_XII/HGFA"/>
</dbReference>
<dbReference type="InterPro" id="IPR000742">
    <property type="entry name" value="EGF-like_dom"/>
</dbReference>
<dbReference type="InterPro" id="IPR000083">
    <property type="entry name" value="Fibronectin_type1"/>
</dbReference>
<dbReference type="InterPro" id="IPR000562">
    <property type="entry name" value="FN_type2_dom"/>
</dbReference>
<dbReference type="InterPro" id="IPR036943">
    <property type="entry name" value="FN_type2_sf"/>
</dbReference>
<dbReference type="InterPro" id="IPR000001">
    <property type="entry name" value="Kringle"/>
</dbReference>
<dbReference type="InterPro" id="IPR013806">
    <property type="entry name" value="Kringle-like"/>
</dbReference>
<dbReference type="InterPro" id="IPR018056">
    <property type="entry name" value="Kringle_CS"/>
</dbReference>
<dbReference type="InterPro" id="IPR038178">
    <property type="entry name" value="Kringle_sf"/>
</dbReference>
<dbReference type="InterPro" id="IPR009003">
    <property type="entry name" value="Peptidase_S1_PA"/>
</dbReference>
<dbReference type="InterPro" id="IPR043504">
    <property type="entry name" value="Peptidase_S1_PA_chymotrypsin"/>
</dbReference>
<dbReference type="InterPro" id="IPR001314">
    <property type="entry name" value="Peptidase_S1A"/>
</dbReference>
<dbReference type="InterPro" id="IPR050127">
    <property type="entry name" value="Serine_Proteases_S1"/>
</dbReference>
<dbReference type="InterPro" id="IPR001254">
    <property type="entry name" value="Trypsin_dom"/>
</dbReference>
<dbReference type="InterPro" id="IPR018114">
    <property type="entry name" value="TRYPSIN_HIS"/>
</dbReference>
<dbReference type="InterPro" id="IPR033116">
    <property type="entry name" value="TRYPSIN_SER"/>
</dbReference>
<dbReference type="PANTHER" id="PTHR24264:SF43">
    <property type="entry name" value="HEPATOCYTE GROWTH FACTOR ACTIVATOR"/>
    <property type="match status" value="1"/>
</dbReference>
<dbReference type="PANTHER" id="PTHR24264">
    <property type="entry name" value="TRYPSIN-RELATED"/>
    <property type="match status" value="1"/>
</dbReference>
<dbReference type="Pfam" id="PF00008">
    <property type="entry name" value="EGF"/>
    <property type="match status" value="2"/>
</dbReference>
<dbReference type="Pfam" id="PF00039">
    <property type="entry name" value="fn1"/>
    <property type="match status" value="1"/>
</dbReference>
<dbReference type="Pfam" id="PF00040">
    <property type="entry name" value="fn2"/>
    <property type="match status" value="1"/>
</dbReference>
<dbReference type="Pfam" id="PF00051">
    <property type="entry name" value="Kringle"/>
    <property type="match status" value="1"/>
</dbReference>
<dbReference type="Pfam" id="PF00089">
    <property type="entry name" value="Trypsin"/>
    <property type="match status" value="1"/>
</dbReference>
<dbReference type="PIRSF" id="PIRSF001146">
    <property type="entry name" value="Factor_XII_HGFA"/>
    <property type="match status" value="1"/>
</dbReference>
<dbReference type="PRINTS" id="PR00722">
    <property type="entry name" value="CHYMOTRYPSIN"/>
</dbReference>
<dbReference type="PRINTS" id="PR00013">
    <property type="entry name" value="FNTYPEII"/>
</dbReference>
<dbReference type="PRINTS" id="PR00018">
    <property type="entry name" value="KRINGLE"/>
</dbReference>
<dbReference type="SMART" id="SM00181">
    <property type="entry name" value="EGF"/>
    <property type="match status" value="2"/>
</dbReference>
<dbReference type="SMART" id="SM00058">
    <property type="entry name" value="FN1"/>
    <property type="match status" value="1"/>
</dbReference>
<dbReference type="SMART" id="SM00059">
    <property type="entry name" value="FN2"/>
    <property type="match status" value="1"/>
</dbReference>
<dbReference type="SMART" id="SM00130">
    <property type="entry name" value="KR"/>
    <property type="match status" value="1"/>
</dbReference>
<dbReference type="SMART" id="SM00020">
    <property type="entry name" value="Tryp_SPc"/>
    <property type="match status" value="1"/>
</dbReference>
<dbReference type="SUPFAM" id="SSF57196">
    <property type="entry name" value="EGF/Laminin"/>
    <property type="match status" value="1"/>
</dbReference>
<dbReference type="SUPFAM" id="SSF57440">
    <property type="entry name" value="Kringle-like"/>
    <property type="match status" value="2"/>
</dbReference>
<dbReference type="SUPFAM" id="SSF50494">
    <property type="entry name" value="Trypsin-like serine proteases"/>
    <property type="match status" value="1"/>
</dbReference>
<dbReference type="PROSITE" id="PS00022">
    <property type="entry name" value="EGF_1"/>
    <property type="match status" value="2"/>
</dbReference>
<dbReference type="PROSITE" id="PS01186">
    <property type="entry name" value="EGF_2"/>
    <property type="match status" value="1"/>
</dbReference>
<dbReference type="PROSITE" id="PS50026">
    <property type="entry name" value="EGF_3"/>
    <property type="match status" value="2"/>
</dbReference>
<dbReference type="PROSITE" id="PS01253">
    <property type="entry name" value="FN1_1"/>
    <property type="match status" value="1"/>
</dbReference>
<dbReference type="PROSITE" id="PS51091">
    <property type="entry name" value="FN1_2"/>
    <property type="match status" value="1"/>
</dbReference>
<dbReference type="PROSITE" id="PS00023">
    <property type="entry name" value="FN2_1"/>
    <property type="match status" value="1"/>
</dbReference>
<dbReference type="PROSITE" id="PS51092">
    <property type="entry name" value="FN2_2"/>
    <property type="match status" value="1"/>
</dbReference>
<dbReference type="PROSITE" id="PS00021">
    <property type="entry name" value="KRINGLE_1"/>
    <property type="match status" value="1"/>
</dbReference>
<dbReference type="PROSITE" id="PS50070">
    <property type="entry name" value="KRINGLE_2"/>
    <property type="match status" value="1"/>
</dbReference>
<dbReference type="PROSITE" id="PS50240">
    <property type="entry name" value="TRYPSIN_DOM"/>
    <property type="match status" value="1"/>
</dbReference>
<dbReference type="PROSITE" id="PS00134">
    <property type="entry name" value="TRYPSIN_HIS"/>
    <property type="match status" value="1"/>
</dbReference>
<dbReference type="PROSITE" id="PS00135">
    <property type="entry name" value="TRYPSIN_SER"/>
    <property type="match status" value="1"/>
</dbReference>